<evidence type="ECO:0000255" key="1">
    <source>
        <dbReference type="HAMAP-Rule" id="MF_01656"/>
    </source>
</evidence>
<organism>
    <name type="scientific">Rhodococcus opacus (strain B4)</name>
    <dbReference type="NCBI Taxonomy" id="632772"/>
    <lineage>
        <taxon>Bacteria</taxon>
        <taxon>Bacillati</taxon>
        <taxon>Actinomycetota</taxon>
        <taxon>Actinomycetes</taxon>
        <taxon>Mycobacteriales</taxon>
        <taxon>Nocardiaceae</taxon>
        <taxon>Rhodococcus</taxon>
    </lineage>
</organism>
<sequence length="347" mass="36293">MNTPAQKKITIVDTTLRDGMSSVSHQFTPQNVADIARGLDKAGVGTIEVAHGIGLGASSIQYGFAAATDPDYVRAAVDAVENADIAALYVPGIATLAELQKAIDAGIKTVRVAVHCTEADCGQQPVEWAKEQGLTVMTFLMMSHKLDPEPLAEQAAKLDSYGADVVYVVDSAGAMVPQHAGDRVAALRQVITADIGFHAHNNLGVGIANALTAAENGATFIDGSLRGLGASAGNAQTEVLAAAFERAGWDTGVDLFPLIDTAEHIVAPLMKEPQIVDETALILGYAGVYSTFFHPTKRAAKKFGVPARDILMELGRRGVIGGQEDMIIDVASELAGRTYETPALAGS</sequence>
<name>HOA4_RHOOB</name>
<protein>
    <recommendedName>
        <fullName evidence="1">4-hydroxy-2-oxovalerate aldolase 4</fullName>
        <shortName evidence="1">HOA 4</shortName>
        <ecNumber evidence="1">4.1.3.39</ecNumber>
    </recommendedName>
    <alternativeName>
        <fullName evidence="1">4-hydroxy-2-keto-pentanoic acid aldolase 4</fullName>
    </alternativeName>
    <alternativeName>
        <fullName evidence="1">4-hydroxy-2-oxopentanoate aldolase 4</fullName>
    </alternativeName>
</protein>
<feature type="chain" id="PRO_0000387895" description="4-hydroxy-2-oxovalerate aldolase 4">
    <location>
        <begin position="1"/>
        <end position="347"/>
    </location>
</feature>
<feature type="domain" description="Pyruvate carboxyltransferase" evidence="1">
    <location>
        <begin position="9"/>
        <end position="259"/>
    </location>
</feature>
<feature type="binding site" evidence="1">
    <location>
        <begin position="17"/>
        <end position="18"/>
    </location>
    <ligand>
        <name>substrate</name>
    </ligand>
</feature>
<feature type="binding site" evidence="1">
    <location>
        <position position="18"/>
    </location>
    <ligand>
        <name>Mn(2+)</name>
        <dbReference type="ChEBI" id="CHEBI:29035"/>
    </ligand>
</feature>
<feature type="binding site" evidence="1">
    <location>
        <position position="171"/>
    </location>
    <ligand>
        <name>substrate</name>
    </ligand>
</feature>
<feature type="binding site" evidence="1">
    <location>
        <position position="198"/>
    </location>
    <ligand>
        <name>Mn(2+)</name>
        <dbReference type="ChEBI" id="CHEBI:29035"/>
    </ligand>
</feature>
<feature type="binding site" evidence="1">
    <location>
        <position position="198"/>
    </location>
    <ligand>
        <name>substrate</name>
    </ligand>
</feature>
<feature type="binding site" evidence="1">
    <location>
        <position position="200"/>
    </location>
    <ligand>
        <name>Mn(2+)</name>
        <dbReference type="ChEBI" id="CHEBI:29035"/>
    </ligand>
</feature>
<feature type="binding site" evidence="1">
    <location>
        <position position="289"/>
    </location>
    <ligand>
        <name>substrate</name>
    </ligand>
</feature>
<feature type="site" description="Transition state stabilizer" evidence="1">
    <location>
        <position position="17"/>
    </location>
</feature>
<proteinExistence type="inferred from homology"/>
<reference key="1">
    <citation type="submission" date="2009-03" db="EMBL/GenBank/DDBJ databases">
        <title>Comparison of the complete genome sequences of Rhodococcus erythropolis PR4 and Rhodococcus opacus B4.</title>
        <authorList>
            <person name="Takarada H."/>
            <person name="Sekine M."/>
            <person name="Hosoyama A."/>
            <person name="Yamada R."/>
            <person name="Fujisawa T."/>
            <person name="Omata S."/>
            <person name="Shimizu A."/>
            <person name="Tsukatani N."/>
            <person name="Tanikawa S."/>
            <person name="Fujita N."/>
            <person name="Harayama S."/>
        </authorList>
    </citation>
    <scope>NUCLEOTIDE SEQUENCE [LARGE SCALE GENOMIC DNA]</scope>
    <source>
        <strain>B4</strain>
    </source>
</reference>
<dbReference type="EC" id="4.1.3.39" evidence="1"/>
<dbReference type="EMBL" id="AP011115">
    <property type="protein sequence ID" value="BAH53652.1"/>
    <property type="molecule type" value="Genomic_DNA"/>
</dbReference>
<dbReference type="RefSeq" id="WP_015889153.1">
    <property type="nucleotide sequence ID" value="NC_012522.1"/>
</dbReference>
<dbReference type="SMR" id="C1AVG2"/>
<dbReference type="STRING" id="632772.ROP_54050"/>
<dbReference type="KEGG" id="rop:ROP_54050"/>
<dbReference type="PATRIC" id="fig|632772.20.peg.5642"/>
<dbReference type="HOGENOM" id="CLU_049173_0_0_11"/>
<dbReference type="OrthoDB" id="9803573at2"/>
<dbReference type="Proteomes" id="UP000002212">
    <property type="component" value="Chromosome"/>
</dbReference>
<dbReference type="GO" id="GO:0003852">
    <property type="term" value="F:2-isopropylmalate synthase activity"/>
    <property type="evidence" value="ECO:0007669"/>
    <property type="project" value="TreeGrafter"/>
</dbReference>
<dbReference type="GO" id="GO:0008701">
    <property type="term" value="F:4-hydroxy-2-oxovalerate aldolase activity"/>
    <property type="evidence" value="ECO:0007669"/>
    <property type="project" value="UniProtKB-UniRule"/>
</dbReference>
<dbReference type="GO" id="GO:0030145">
    <property type="term" value="F:manganese ion binding"/>
    <property type="evidence" value="ECO:0007669"/>
    <property type="project" value="UniProtKB-UniRule"/>
</dbReference>
<dbReference type="GO" id="GO:0009056">
    <property type="term" value="P:catabolic process"/>
    <property type="evidence" value="ECO:0007669"/>
    <property type="project" value="UniProtKB-KW"/>
</dbReference>
<dbReference type="GO" id="GO:0009098">
    <property type="term" value="P:L-leucine biosynthetic process"/>
    <property type="evidence" value="ECO:0007669"/>
    <property type="project" value="TreeGrafter"/>
</dbReference>
<dbReference type="CDD" id="cd07943">
    <property type="entry name" value="DRE_TIM_HOA"/>
    <property type="match status" value="1"/>
</dbReference>
<dbReference type="Gene3D" id="1.10.8.60">
    <property type="match status" value="1"/>
</dbReference>
<dbReference type="Gene3D" id="3.20.20.70">
    <property type="entry name" value="Aldolase class I"/>
    <property type="match status" value="1"/>
</dbReference>
<dbReference type="HAMAP" id="MF_01656">
    <property type="entry name" value="HOA"/>
    <property type="match status" value="1"/>
</dbReference>
<dbReference type="InterPro" id="IPR050073">
    <property type="entry name" value="2-IPM_HCS-like"/>
</dbReference>
<dbReference type="InterPro" id="IPR017629">
    <property type="entry name" value="4OH_2_O-val_aldolase"/>
</dbReference>
<dbReference type="InterPro" id="IPR013785">
    <property type="entry name" value="Aldolase_TIM"/>
</dbReference>
<dbReference type="InterPro" id="IPR012425">
    <property type="entry name" value="DmpG_comm"/>
</dbReference>
<dbReference type="InterPro" id="IPR035685">
    <property type="entry name" value="DRE_TIM_HOA"/>
</dbReference>
<dbReference type="InterPro" id="IPR000891">
    <property type="entry name" value="PYR_CT"/>
</dbReference>
<dbReference type="NCBIfam" id="TIGR03217">
    <property type="entry name" value="4OH_2_O_val_ald"/>
    <property type="match status" value="1"/>
</dbReference>
<dbReference type="NCBIfam" id="NF006049">
    <property type="entry name" value="PRK08195.1"/>
    <property type="match status" value="1"/>
</dbReference>
<dbReference type="PANTHER" id="PTHR10277:SF9">
    <property type="entry name" value="2-ISOPROPYLMALATE SYNTHASE 1, CHLOROPLASTIC-RELATED"/>
    <property type="match status" value="1"/>
</dbReference>
<dbReference type="PANTHER" id="PTHR10277">
    <property type="entry name" value="HOMOCITRATE SYNTHASE-RELATED"/>
    <property type="match status" value="1"/>
</dbReference>
<dbReference type="Pfam" id="PF07836">
    <property type="entry name" value="DmpG_comm"/>
    <property type="match status" value="1"/>
</dbReference>
<dbReference type="Pfam" id="PF00682">
    <property type="entry name" value="HMGL-like"/>
    <property type="match status" value="1"/>
</dbReference>
<dbReference type="SUPFAM" id="SSF51569">
    <property type="entry name" value="Aldolase"/>
    <property type="match status" value="1"/>
</dbReference>
<dbReference type="SUPFAM" id="SSF89000">
    <property type="entry name" value="post-HMGL domain-like"/>
    <property type="match status" value="1"/>
</dbReference>
<dbReference type="PROSITE" id="PS50991">
    <property type="entry name" value="PYR_CT"/>
    <property type="match status" value="1"/>
</dbReference>
<keyword id="KW-0058">Aromatic hydrocarbons catabolism</keyword>
<keyword id="KW-0456">Lyase</keyword>
<keyword id="KW-0464">Manganese</keyword>
<keyword id="KW-0479">Metal-binding</keyword>
<comment type="catalytic activity">
    <reaction evidence="1">
        <text>(S)-4-hydroxy-2-oxopentanoate = acetaldehyde + pyruvate</text>
        <dbReference type="Rhea" id="RHEA:22624"/>
        <dbReference type="ChEBI" id="CHEBI:15343"/>
        <dbReference type="ChEBI" id="CHEBI:15361"/>
        <dbReference type="ChEBI" id="CHEBI:73143"/>
        <dbReference type="EC" id="4.1.3.39"/>
    </reaction>
</comment>
<comment type="similarity">
    <text evidence="1">Belongs to the 4-hydroxy-2-oxovalerate aldolase family.</text>
</comment>
<gene>
    <name type="ordered locus">ROP_54050</name>
</gene>
<accession>C1AVG2</accession>